<protein>
    <recommendedName>
        <fullName>Trans-2,3-dihydro-3-hydroxyanthranilate isomerase</fullName>
        <ecNumber evidence="2">5.3.3.17</ecNumber>
    </recommendedName>
    <alternativeName>
        <fullName>Phenazine/pyocyanine biosynthesis protein PhzF</fullName>
    </alternativeName>
</protein>
<keyword id="KW-0045">Antibiotic biosynthesis</keyword>
<keyword id="KW-0413">Isomerase</keyword>
<keyword id="KW-0843">Virulence</keyword>
<proteinExistence type="inferred from homology"/>
<gene>
    <name type="primary">phzF</name>
    <name type="synonym">phzC</name>
</gene>
<evidence type="ECO:0000250" key="1"/>
<evidence type="ECO:0000250" key="2">
    <source>
        <dbReference type="UniProtKB" id="Q51792"/>
    </source>
</evidence>
<evidence type="ECO:0000305" key="3"/>
<dbReference type="EC" id="5.3.3.17" evidence="2"/>
<dbReference type="EMBL" id="L48339">
    <property type="protein sequence ID" value="AAB00331.1"/>
    <property type="molecule type" value="Genomic_DNA"/>
</dbReference>
<dbReference type="EMBL" id="AF195615">
    <property type="protein sequence ID" value="AAF17500.1"/>
    <property type="molecule type" value="Genomic_DNA"/>
</dbReference>
<dbReference type="SMR" id="Q51520"/>
<dbReference type="UniPathway" id="UPA00099"/>
<dbReference type="GO" id="GO:0005737">
    <property type="term" value="C:cytoplasm"/>
    <property type="evidence" value="ECO:0007669"/>
    <property type="project" value="TreeGrafter"/>
</dbReference>
<dbReference type="GO" id="GO:0102943">
    <property type="term" value="F:trans-2,3-dihydro-3-hydroxy-anthranilate isomerase activity"/>
    <property type="evidence" value="ECO:0007669"/>
    <property type="project" value="UniProtKB-EC"/>
</dbReference>
<dbReference type="GO" id="GO:0002047">
    <property type="term" value="P:phenazine biosynthetic process"/>
    <property type="evidence" value="ECO:0007669"/>
    <property type="project" value="UniProtKB-UniPathway"/>
</dbReference>
<dbReference type="Gene3D" id="3.10.310.10">
    <property type="entry name" value="Diaminopimelate Epimerase, Chain A, domain 1"/>
    <property type="match status" value="2"/>
</dbReference>
<dbReference type="InterPro" id="IPR003719">
    <property type="entry name" value="Phenazine_PhzF-like"/>
</dbReference>
<dbReference type="NCBIfam" id="TIGR00654">
    <property type="entry name" value="PhzF_family"/>
    <property type="match status" value="1"/>
</dbReference>
<dbReference type="PANTHER" id="PTHR13774:SF32">
    <property type="entry name" value="ANTISENSE-ENHANCING SEQUENCE 1"/>
    <property type="match status" value="1"/>
</dbReference>
<dbReference type="PANTHER" id="PTHR13774">
    <property type="entry name" value="PHENAZINE BIOSYNTHESIS PROTEIN"/>
    <property type="match status" value="1"/>
</dbReference>
<dbReference type="Pfam" id="PF02567">
    <property type="entry name" value="PhzC-PhzF"/>
    <property type="match status" value="1"/>
</dbReference>
<dbReference type="PIRSF" id="PIRSF016184">
    <property type="entry name" value="PhzC_PhzF"/>
    <property type="match status" value="1"/>
</dbReference>
<dbReference type="SUPFAM" id="SSF54506">
    <property type="entry name" value="Diaminopimelate epimerase-like"/>
    <property type="match status" value="1"/>
</dbReference>
<name>PHZF_PSECL</name>
<comment type="function">
    <text evidence="2">Isomerase that catalyzes the condensation of two molecules of trans-2,3-dihydro-3-hydroxyanthranilic acid (DHHA) into the phenazine ring system. The final product is not yet known.</text>
</comment>
<comment type="catalytic activity">
    <reaction evidence="2">
        <text>(5S,6S)-6-amino-5-hydroxycyclohexa-1,3-diene-1-carboxyate = (1R,6S)-6-amino-5-oxocyclohex-2-ene-1-carboxylate</text>
        <dbReference type="Rhea" id="RHEA:28182"/>
        <dbReference type="ChEBI" id="CHEBI:60849"/>
        <dbReference type="ChEBI" id="CHEBI:60862"/>
        <dbReference type="EC" id="5.3.3.17"/>
    </reaction>
</comment>
<comment type="pathway">
    <text>Antibiotic biosynthesis; phenazine biosynthesis.</text>
</comment>
<comment type="similarity">
    <text evidence="3">Belongs to the PhzF family.</text>
</comment>
<organism>
    <name type="scientific">Pseudomonas chlororaphis</name>
    <name type="common">Pseudomonas aureofaciens</name>
    <dbReference type="NCBI Taxonomy" id="333"/>
    <lineage>
        <taxon>Bacteria</taxon>
        <taxon>Pseudomonadati</taxon>
        <taxon>Pseudomonadota</taxon>
        <taxon>Gammaproteobacteria</taxon>
        <taxon>Pseudomonadales</taxon>
        <taxon>Pseudomonadaceae</taxon>
        <taxon>Pseudomonas</taxon>
    </lineage>
</organism>
<feature type="chain" id="PRO_0000162381" description="Trans-2,3-dihydro-3-hydroxyanthranilate isomerase">
    <location>
        <begin position="1"/>
        <end position="278"/>
    </location>
</feature>
<feature type="active site" evidence="1">
    <location>
        <position position="45"/>
    </location>
</feature>
<feature type="sequence conflict" description="In Ref. 1; AAB00331." evidence="3" ref="1">
    <original>H</original>
    <variation>E</variation>
    <location>
        <position position="2"/>
    </location>
</feature>
<feature type="sequence conflict" description="In Ref. 1; AAB00331." evidence="3" ref="1">
    <original>A</original>
    <variation>V</variation>
    <location>
        <position position="13"/>
    </location>
</feature>
<feature type="sequence conflict" description="In Ref. 1; AAB00331." evidence="3" ref="1">
    <original>T</original>
    <variation>A</variation>
    <location>
        <position position="21"/>
    </location>
</feature>
<feature type="sequence conflict" description="In Ref. 1; AAB00331." evidence="3" ref="1">
    <original>T</original>
    <variation>E</variation>
    <location>
        <position position="32"/>
    </location>
</feature>
<feature type="sequence conflict" description="In Ref. 1; AAB00331." evidence="3" ref="1">
    <original>A</original>
    <variation>D</variation>
    <location>
        <position position="80"/>
    </location>
</feature>
<feature type="sequence conflict" description="In Ref. 1; AAB00331." evidence="3" ref="1">
    <original>H</original>
    <variation>R</variation>
    <location>
        <position position="86"/>
    </location>
</feature>
<feature type="sequence conflict" description="In Ref. 1; AAB00331." evidence="3" ref="1">
    <original>V</original>
    <variation>I</variation>
    <location>
        <position position="113"/>
    </location>
</feature>
<feature type="sequence conflict" description="In Ref. 1; AAB00331." evidence="3" ref="1">
    <original>V</original>
    <variation>A</variation>
    <location>
        <position position="131"/>
    </location>
</feature>
<feature type="sequence conflict" description="In Ref. 1; AAB00331." evidence="3" ref="1">
    <original>S</original>
    <variation>Y</variation>
    <location>
        <position position="177"/>
    </location>
</feature>
<feature type="sequence conflict" description="In Ref. 1; AAB00331." evidence="3" ref="1">
    <original>V</original>
    <variation>I</variation>
    <location>
        <position position="269"/>
    </location>
</feature>
<sequence length="278" mass="30118">MHHYVIIDAFASAPLEGNPVTVFFDADDLSATQMQRIAREMNLSETTFVLKPRNCGDALIRIFTPVNELPFAGHPLLGTAIALGAHTDNHRLFLETQMGTIAFELERQNGSVVAASMDQPIPTWTALGRDVELLKALGISDSTFPIEIYHNGPRHVFVGLPSIAALSALHPDHRALSSFHDMAINCFAGAGRRWRSRMFSPAYGVVEDAATGSAAGPLAIHLARHGQIEFGQQIEILQGVEIGRPSLMFARAEGRADQLTRVEVSGNGVTFGRGTIVL</sequence>
<accession>Q51520</accession>
<accession>Q9R9G2</accession>
<reference key="1">
    <citation type="journal article" date="1995" name="FEMS Microbiol. Lett.">
        <title>Molecular analysis of genes encoding phenazine biosynthesis in the biological control bacterium. Pseudomonas aureofaciens 30-84.</title>
        <authorList>
            <person name="Pierson L.S. III"/>
            <person name="Gaffney T."/>
            <person name="Lam S."/>
            <person name="Gong F."/>
        </authorList>
    </citation>
    <scope>NUCLEOTIDE SEQUENCE [GENOMIC DNA]</scope>
    <source>
        <strain>30-84</strain>
    </source>
</reference>
<reference key="2">
    <citation type="journal article" date="2001" name="Mol. Plant Microbe Interact.">
        <title>Phenazine-1-carboxamide production in the biocontrol strain Pseudomonas chlororaphis PCL1391 is regulated by multiple factors secreted into the growth medium.</title>
        <authorList>
            <person name="Chin-A-Woeng T.F.C."/>
            <person name="van den Broek D."/>
            <person name="de Voer G."/>
            <person name="van der Drift K.M."/>
            <person name="Tuinman S."/>
            <person name="Thomas-Oates J.E."/>
            <person name="Lugtenberg B.J.J."/>
            <person name="Bloemberg G.V."/>
        </authorList>
    </citation>
    <scope>NUCLEOTIDE SEQUENCE [GENOMIC DNA]</scope>
    <source>
        <strain>PCL1391</strain>
    </source>
</reference>